<accession>Q7WRA4</accession>
<protein>
    <recommendedName>
        <fullName evidence="1">Large ribosomal subunit protein uL15</fullName>
    </recommendedName>
    <alternativeName>
        <fullName evidence="3">50S ribosomal protein L15</fullName>
    </alternativeName>
</protein>
<reference key="1">
    <citation type="journal article" date="2003" name="Nat. Genet.">
        <title>Comparative analysis of the genome sequences of Bordetella pertussis, Bordetella parapertussis and Bordetella bronchiseptica.</title>
        <authorList>
            <person name="Parkhill J."/>
            <person name="Sebaihia M."/>
            <person name="Preston A."/>
            <person name="Murphy L.D."/>
            <person name="Thomson N.R."/>
            <person name="Harris D.E."/>
            <person name="Holden M.T.G."/>
            <person name="Churcher C.M."/>
            <person name="Bentley S.D."/>
            <person name="Mungall K.L."/>
            <person name="Cerdeno-Tarraga A.-M."/>
            <person name="Temple L."/>
            <person name="James K.D."/>
            <person name="Harris B."/>
            <person name="Quail M.A."/>
            <person name="Achtman M."/>
            <person name="Atkin R."/>
            <person name="Baker S."/>
            <person name="Basham D."/>
            <person name="Bason N."/>
            <person name="Cherevach I."/>
            <person name="Chillingworth T."/>
            <person name="Collins M."/>
            <person name="Cronin A."/>
            <person name="Davis P."/>
            <person name="Doggett J."/>
            <person name="Feltwell T."/>
            <person name="Goble A."/>
            <person name="Hamlin N."/>
            <person name="Hauser H."/>
            <person name="Holroyd S."/>
            <person name="Jagels K."/>
            <person name="Leather S."/>
            <person name="Moule S."/>
            <person name="Norberczak H."/>
            <person name="O'Neil S."/>
            <person name="Ormond D."/>
            <person name="Price C."/>
            <person name="Rabbinowitsch E."/>
            <person name="Rutter S."/>
            <person name="Sanders M."/>
            <person name="Saunders D."/>
            <person name="Seeger K."/>
            <person name="Sharp S."/>
            <person name="Simmonds M."/>
            <person name="Skelton J."/>
            <person name="Squares R."/>
            <person name="Squares S."/>
            <person name="Stevens K."/>
            <person name="Unwin L."/>
            <person name="Whitehead S."/>
            <person name="Barrell B.G."/>
            <person name="Maskell D.J."/>
        </authorList>
    </citation>
    <scope>NUCLEOTIDE SEQUENCE [LARGE SCALE GENOMIC DNA]</scope>
    <source>
        <strain>ATCC BAA-588 / NCTC 13252 / RB50</strain>
    </source>
</reference>
<dbReference type="EMBL" id="BX640437">
    <property type="protein sequence ID" value="CAE30552.1"/>
    <property type="molecule type" value="Genomic_DNA"/>
</dbReference>
<dbReference type="RefSeq" id="WP_003806925.1">
    <property type="nucleotide sequence ID" value="NC_002927.3"/>
</dbReference>
<dbReference type="SMR" id="Q7WRA4"/>
<dbReference type="GeneID" id="69600137"/>
<dbReference type="KEGG" id="bbr:BB0050"/>
<dbReference type="eggNOG" id="COG0200">
    <property type="taxonomic scope" value="Bacteria"/>
</dbReference>
<dbReference type="HOGENOM" id="CLU_055188_4_2_4"/>
<dbReference type="Proteomes" id="UP000001027">
    <property type="component" value="Chromosome"/>
</dbReference>
<dbReference type="GO" id="GO:0022625">
    <property type="term" value="C:cytosolic large ribosomal subunit"/>
    <property type="evidence" value="ECO:0007669"/>
    <property type="project" value="TreeGrafter"/>
</dbReference>
<dbReference type="GO" id="GO:0019843">
    <property type="term" value="F:rRNA binding"/>
    <property type="evidence" value="ECO:0007669"/>
    <property type="project" value="UniProtKB-UniRule"/>
</dbReference>
<dbReference type="GO" id="GO:0003735">
    <property type="term" value="F:structural constituent of ribosome"/>
    <property type="evidence" value="ECO:0007669"/>
    <property type="project" value="InterPro"/>
</dbReference>
<dbReference type="GO" id="GO:0006412">
    <property type="term" value="P:translation"/>
    <property type="evidence" value="ECO:0007669"/>
    <property type="project" value="UniProtKB-UniRule"/>
</dbReference>
<dbReference type="Gene3D" id="3.100.10.10">
    <property type="match status" value="1"/>
</dbReference>
<dbReference type="HAMAP" id="MF_01341">
    <property type="entry name" value="Ribosomal_uL15"/>
    <property type="match status" value="1"/>
</dbReference>
<dbReference type="InterPro" id="IPR030878">
    <property type="entry name" value="Ribosomal_uL15"/>
</dbReference>
<dbReference type="InterPro" id="IPR021131">
    <property type="entry name" value="Ribosomal_uL15/eL18"/>
</dbReference>
<dbReference type="InterPro" id="IPR036227">
    <property type="entry name" value="Ribosomal_uL15/eL18_sf"/>
</dbReference>
<dbReference type="InterPro" id="IPR005749">
    <property type="entry name" value="Ribosomal_uL15_bac-type"/>
</dbReference>
<dbReference type="NCBIfam" id="TIGR01071">
    <property type="entry name" value="rplO_bact"/>
    <property type="match status" value="1"/>
</dbReference>
<dbReference type="PANTHER" id="PTHR12934">
    <property type="entry name" value="50S RIBOSOMAL PROTEIN L15"/>
    <property type="match status" value="1"/>
</dbReference>
<dbReference type="PANTHER" id="PTHR12934:SF11">
    <property type="entry name" value="LARGE RIBOSOMAL SUBUNIT PROTEIN UL15M"/>
    <property type="match status" value="1"/>
</dbReference>
<dbReference type="Pfam" id="PF00828">
    <property type="entry name" value="Ribosomal_L27A"/>
    <property type="match status" value="1"/>
</dbReference>
<dbReference type="SUPFAM" id="SSF52080">
    <property type="entry name" value="Ribosomal proteins L15p and L18e"/>
    <property type="match status" value="1"/>
</dbReference>
<evidence type="ECO:0000255" key="1">
    <source>
        <dbReference type="HAMAP-Rule" id="MF_01341"/>
    </source>
</evidence>
<evidence type="ECO:0000256" key="2">
    <source>
        <dbReference type="SAM" id="MobiDB-lite"/>
    </source>
</evidence>
<evidence type="ECO:0000305" key="3"/>
<proteinExistence type="inferred from homology"/>
<gene>
    <name evidence="1" type="primary">rplO</name>
    <name type="ordered locus">BB0050</name>
</gene>
<name>RL15_BORBR</name>
<organism>
    <name type="scientific">Bordetella bronchiseptica (strain ATCC BAA-588 / NCTC 13252 / RB50)</name>
    <name type="common">Alcaligenes bronchisepticus</name>
    <dbReference type="NCBI Taxonomy" id="257310"/>
    <lineage>
        <taxon>Bacteria</taxon>
        <taxon>Pseudomonadati</taxon>
        <taxon>Pseudomonadota</taxon>
        <taxon>Betaproteobacteria</taxon>
        <taxon>Burkholderiales</taxon>
        <taxon>Alcaligenaceae</taxon>
        <taxon>Bordetella</taxon>
    </lineage>
</organism>
<keyword id="KW-0687">Ribonucleoprotein</keyword>
<keyword id="KW-0689">Ribosomal protein</keyword>
<keyword id="KW-0694">RNA-binding</keyword>
<keyword id="KW-0699">rRNA-binding</keyword>
<feature type="chain" id="PRO_0000104684" description="Large ribosomal subunit protein uL15">
    <location>
        <begin position="1"/>
        <end position="146"/>
    </location>
</feature>
<feature type="region of interest" description="Disordered" evidence="2">
    <location>
        <begin position="1"/>
        <end position="56"/>
    </location>
</feature>
<feature type="compositionally biased region" description="Gly residues" evidence="2">
    <location>
        <begin position="24"/>
        <end position="34"/>
    </location>
</feature>
<sequence length="146" mass="15368">MSDIQLNTLKPAEGSKHAKRRVGRGIGSGLGKTAGRGHKGQKSRSGGFHKVGFEGGQMPLQRRLPKRGFTPLGQHLYAEVRLSELQLMEAEEIDVQALKAAGVVGQSVRYAKVIKSGELSRKVVLRGITATAGARAAIEAAGGSLA</sequence>
<comment type="function">
    <text evidence="1">Binds to the 23S rRNA.</text>
</comment>
<comment type="subunit">
    <text evidence="1">Part of the 50S ribosomal subunit.</text>
</comment>
<comment type="similarity">
    <text evidence="1">Belongs to the universal ribosomal protein uL15 family.</text>
</comment>